<evidence type="ECO:0000250" key="1"/>
<evidence type="ECO:0000255" key="2">
    <source>
        <dbReference type="HAMAP-Rule" id="MF_00403"/>
    </source>
</evidence>
<evidence type="ECO:0000305" key="3"/>
<comment type="function">
    <text evidence="2">With S4 and S5 plays an important role in translational accuracy.</text>
</comment>
<comment type="function">
    <text evidence="2">Interacts with and stabilizes bases of the 16S rRNA that are involved in tRNA selection in the A site and with the mRNA backbone. Located at the interface of the 30S and 50S subunits, it traverses the body of the 30S subunit contacting proteins on the other side and probably holding the rRNA structure together. The combined cluster of proteins S8, S12 and S17 appears to hold together the shoulder and platform of the 30S subunit.</text>
</comment>
<comment type="subunit">
    <text evidence="2">Part of the 30S ribosomal subunit. Contacts proteins S8 and S17. May interact with IF1 in the 30S initiation complex.</text>
</comment>
<comment type="similarity">
    <text evidence="2">Belongs to the universal ribosomal protein uS12 family.</text>
</comment>
<name>RS12_BUCA5</name>
<sequence>MATVNQLVRKPRVRKVIKSNVPALGKSPQKRGVCTRVYTTTPKKPNSALRKVCRVRLTNGFEVTAYIGGEGHNLQEHSVILIRGGRVKDLPGVRYHIVRGSLDCAGVKERKQGRSKYGVKKPKK</sequence>
<gene>
    <name evidence="2" type="primary">rpsL</name>
    <name type="ordered locus">BUAP5A_522</name>
</gene>
<feature type="chain" id="PRO_1000134621" description="Small ribosomal subunit protein uS12">
    <location>
        <begin position="1"/>
        <end position="124"/>
    </location>
</feature>
<feature type="modified residue" description="3-methylthioaspartic acid" evidence="1">
    <location>
        <position position="89"/>
    </location>
</feature>
<reference key="1">
    <citation type="journal article" date="2009" name="Science">
        <title>The dynamics and time scale of ongoing genomic erosion in symbiotic bacteria.</title>
        <authorList>
            <person name="Moran N.A."/>
            <person name="McLaughlin H.J."/>
            <person name="Sorek R."/>
        </authorList>
    </citation>
    <scope>NUCLEOTIDE SEQUENCE [LARGE SCALE GENOMIC DNA]</scope>
    <source>
        <strain>5A</strain>
    </source>
</reference>
<proteinExistence type="inferred from homology"/>
<protein>
    <recommendedName>
        <fullName evidence="2">Small ribosomal subunit protein uS12</fullName>
    </recommendedName>
    <alternativeName>
        <fullName evidence="3">30S ribosomal protein S12</fullName>
    </alternativeName>
</protein>
<organism>
    <name type="scientific">Buchnera aphidicola subsp. Acyrthosiphon pisum (strain 5A)</name>
    <dbReference type="NCBI Taxonomy" id="563178"/>
    <lineage>
        <taxon>Bacteria</taxon>
        <taxon>Pseudomonadati</taxon>
        <taxon>Pseudomonadota</taxon>
        <taxon>Gammaproteobacteria</taxon>
        <taxon>Enterobacterales</taxon>
        <taxon>Erwiniaceae</taxon>
        <taxon>Buchnera</taxon>
    </lineage>
</organism>
<dbReference type="EMBL" id="CP001161">
    <property type="protein sequence ID" value="ACL30873.1"/>
    <property type="molecule type" value="Genomic_DNA"/>
</dbReference>
<dbReference type="RefSeq" id="WP_009874480.1">
    <property type="nucleotide sequence ID" value="NC_011833.1"/>
</dbReference>
<dbReference type="SMR" id="B8D9V2"/>
<dbReference type="KEGG" id="bap:BUAP5A_522"/>
<dbReference type="HOGENOM" id="CLU_104295_1_2_6"/>
<dbReference type="OrthoDB" id="9802366at2"/>
<dbReference type="Proteomes" id="UP000006904">
    <property type="component" value="Chromosome"/>
</dbReference>
<dbReference type="GO" id="GO:0015935">
    <property type="term" value="C:small ribosomal subunit"/>
    <property type="evidence" value="ECO:0007669"/>
    <property type="project" value="InterPro"/>
</dbReference>
<dbReference type="GO" id="GO:0019843">
    <property type="term" value="F:rRNA binding"/>
    <property type="evidence" value="ECO:0007669"/>
    <property type="project" value="UniProtKB-UniRule"/>
</dbReference>
<dbReference type="GO" id="GO:0003735">
    <property type="term" value="F:structural constituent of ribosome"/>
    <property type="evidence" value="ECO:0007669"/>
    <property type="project" value="InterPro"/>
</dbReference>
<dbReference type="GO" id="GO:0000049">
    <property type="term" value="F:tRNA binding"/>
    <property type="evidence" value="ECO:0007669"/>
    <property type="project" value="UniProtKB-UniRule"/>
</dbReference>
<dbReference type="GO" id="GO:0006412">
    <property type="term" value="P:translation"/>
    <property type="evidence" value="ECO:0007669"/>
    <property type="project" value="UniProtKB-UniRule"/>
</dbReference>
<dbReference type="CDD" id="cd03368">
    <property type="entry name" value="Ribosomal_S12"/>
    <property type="match status" value="1"/>
</dbReference>
<dbReference type="FunFam" id="2.40.50.140:FF:000001">
    <property type="entry name" value="30S ribosomal protein S12"/>
    <property type="match status" value="1"/>
</dbReference>
<dbReference type="Gene3D" id="2.40.50.140">
    <property type="entry name" value="Nucleic acid-binding proteins"/>
    <property type="match status" value="1"/>
</dbReference>
<dbReference type="HAMAP" id="MF_00403_B">
    <property type="entry name" value="Ribosomal_uS12_B"/>
    <property type="match status" value="1"/>
</dbReference>
<dbReference type="InterPro" id="IPR012340">
    <property type="entry name" value="NA-bd_OB-fold"/>
</dbReference>
<dbReference type="InterPro" id="IPR006032">
    <property type="entry name" value="Ribosomal_uS12"/>
</dbReference>
<dbReference type="InterPro" id="IPR005679">
    <property type="entry name" value="Ribosomal_uS12_bac"/>
</dbReference>
<dbReference type="NCBIfam" id="TIGR00981">
    <property type="entry name" value="rpsL_bact"/>
    <property type="match status" value="1"/>
</dbReference>
<dbReference type="PANTHER" id="PTHR11652">
    <property type="entry name" value="30S RIBOSOMAL PROTEIN S12 FAMILY MEMBER"/>
    <property type="match status" value="1"/>
</dbReference>
<dbReference type="Pfam" id="PF00164">
    <property type="entry name" value="Ribosom_S12_S23"/>
    <property type="match status" value="1"/>
</dbReference>
<dbReference type="PIRSF" id="PIRSF002133">
    <property type="entry name" value="Ribosomal_S12/S23"/>
    <property type="match status" value="1"/>
</dbReference>
<dbReference type="PRINTS" id="PR01034">
    <property type="entry name" value="RIBOSOMALS12"/>
</dbReference>
<dbReference type="SUPFAM" id="SSF50249">
    <property type="entry name" value="Nucleic acid-binding proteins"/>
    <property type="match status" value="1"/>
</dbReference>
<dbReference type="PROSITE" id="PS00055">
    <property type="entry name" value="RIBOSOMAL_S12"/>
    <property type="match status" value="1"/>
</dbReference>
<keyword id="KW-0488">Methylation</keyword>
<keyword id="KW-0687">Ribonucleoprotein</keyword>
<keyword id="KW-0689">Ribosomal protein</keyword>
<keyword id="KW-0694">RNA-binding</keyword>
<keyword id="KW-0699">rRNA-binding</keyword>
<keyword id="KW-0820">tRNA-binding</keyword>
<accession>B8D9V2</accession>